<dbReference type="Proteomes" id="UP001155700">
    <property type="component" value="Unplaced"/>
</dbReference>
<dbReference type="GO" id="GO:0009543">
    <property type="term" value="C:chloroplast thylakoid lumen"/>
    <property type="evidence" value="ECO:0007669"/>
    <property type="project" value="UniProtKB-SubCell"/>
</dbReference>
<dbReference type="GO" id="GO:0009523">
    <property type="term" value="C:photosystem II"/>
    <property type="evidence" value="ECO:0007669"/>
    <property type="project" value="UniProtKB-KW"/>
</dbReference>
<dbReference type="GO" id="GO:0015979">
    <property type="term" value="P:photosynthesis"/>
    <property type="evidence" value="ECO:0007669"/>
    <property type="project" value="UniProtKB-KW"/>
</dbReference>
<proteinExistence type="evidence at protein level"/>
<accession>P85303</accession>
<reference evidence="5" key="1">
    <citation type="journal article" date="2002" name="J. Biol. Chem.">
        <title>Proteome map of the chloroplast lumen of Arabidopsis thaliana.</title>
        <authorList>
            <person name="Schubert M."/>
            <person name="Petersson U.A."/>
            <person name="Haas B.J."/>
            <person name="Funk C."/>
            <person name="Schroeder W.P."/>
            <person name="Kieselbach T."/>
        </authorList>
    </citation>
    <scope>PROTEIN SEQUENCE</scope>
    <scope>SUBCELLULAR LOCATION</scope>
    <source>
        <tissue evidence="3">Leaf</tissue>
    </source>
</reference>
<protein>
    <recommendedName>
        <fullName>Photosystem II stability/assembly factor HCF136, chloroplastic</fullName>
    </recommendedName>
</protein>
<feature type="chain" id="PRO_0000308516" description="Photosystem II stability/assembly factor HCF136, chloroplastic">
    <location>
        <begin position="1"/>
        <end position="20" status="greater than"/>
    </location>
</feature>
<feature type="non-terminal residue" evidence="4">
    <location>
        <position position="20"/>
    </location>
</feature>
<evidence type="ECO:0000250" key="1">
    <source>
        <dbReference type="UniProtKB" id="M1VJU3"/>
    </source>
</evidence>
<evidence type="ECO:0000250" key="2">
    <source>
        <dbReference type="UniProtKB" id="O82660"/>
    </source>
</evidence>
<evidence type="ECO:0000269" key="3">
    <source>
    </source>
</evidence>
<evidence type="ECO:0000303" key="4">
    <source>
    </source>
</evidence>
<evidence type="ECO:0000305" key="5"/>
<evidence type="ECO:0000305" key="6">
    <source>
    </source>
</evidence>
<comment type="function">
    <text evidence="2">Essential for photosystem II (PSII) biogenesis; required for assembly of an early intermediate in PSII assembly that includes D2 (psbD) and cytochrome b559.</text>
</comment>
<comment type="subcellular location">
    <subcellularLocation>
        <location evidence="3">Plastid</location>
        <location evidence="3">Chloroplast thylakoid lumen</location>
    </subcellularLocation>
    <text evidence="6">Restricted to the stromal lamelae. Translocation into the thylakoid lumen occurs via the Tat pathway.</text>
</comment>
<comment type="domain">
    <text evidence="1">A 7-bladed beta-propeller torus, about 54 by 55 Angstroms, with a depth of about 25 Angstroms and a central pore.</text>
</comment>
<comment type="similarity">
    <text evidence="5">Belongs to the Ycf48 family.</text>
</comment>
<gene>
    <name evidence="2" type="primary">HCF136</name>
</gene>
<keyword id="KW-0150">Chloroplast</keyword>
<keyword id="KW-0903">Direct protein sequencing</keyword>
<keyword id="KW-0602">Photosynthesis</keyword>
<keyword id="KW-0604">Photosystem II</keyword>
<keyword id="KW-0934">Plastid</keyword>
<keyword id="KW-1185">Reference proteome</keyword>
<keyword id="KW-0793">Thylakoid</keyword>
<sequence>EDSLSDWERVYLPIDPGVVL</sequence>
<name>P2SAF_SPIOL</name>
<organism>
    <name type="scientific">Spinacia oleracea</name>
    <name type="common">Spinach</name>
    <dbReference type="NCBI Taxonomy" id="3562"/>
    <lineage>
        <taxon>Eukaryota</taxon>
        <taxon>Viridiplantae</taxon>
        <taxon>Streptophyta</taxon>
        <taxon>Embryophyta</taxon>
        <taxon>Tracheophyta</taxon>
        <taxon>Spermatophyta</taxon>
        <taxon>Magnoliopsida</taxon>
        <taxon>eudicotyledons</taxon>
        <taxon>Gunneridae</taxon>
        <taxon>Pentapetalae</taxon>
        <taxon>Caryophyllales</taxon>
        <taxon>Chenopodiaceae</taxon>
        <taxon>Chenopodioideae</taxon>
        <taxon>Anserineae</taxon>
        <taxon>Spinacia</taxon>
    </lineage>
</organism>